<dbReference type="EMBL" id="AAFI02000057">
    <property type="protein sequence ID" value="EAL65534.1"/>
    <property type="molecule type" value="Genomic_DNA"/>
</dbReference>
<dbReference type="RefSeq" id="XP_638904.1">
    <property type="nucleotide sequence ID" value="XM_633812.1"/>
</dbReference>
<dbReference type="SMR" id="Q54QG7"/>
<dbReference type="FunCoup" id="Q54QG7">
    <property type="interactions" value="20"/>
</dbReference>
<dbReference type="GlyCosmos" id="Q54QG7">
    <property type="glycosylation" value="13 sites, No reported glycans"/>
</dbReference>
<dbReference type="GlyGen" id="Q54QG7">
    <property type="glycosylation" value="13 sites"/>
</dbReference>
<dbReference type="PaxDb" id="44689-DDB0231721"/>
<dbReference type="EnsemblProtists" id="EAL65534">
    <property type="protein sequence ID" value="EAL65534"/>
    <property type="gene ID" value="DDB_G0283839"/>
</dbReference>
<dbReference type="GeneID" id="8624301"/>
<dbReference type="KEGG" id="ddi:DDB_G0283839"/>
<dbReference type="dictyBase" id="DDB_G0283839">
    <property type="gene designation" value="grlN"/>
</dbReference>
<dbReference type="VEuPathDB" id="AmoebaDB:DDB_G0283839"/>
<dbReference type="eggNOG" id="KOG1055">
    <property type="taxonomic scope" value="Eukaryota"/>
</dbReference>
<dbReference type="HOGENOM" id="CLU_324261_0_0_1"/>
<dbReference type="InParanoid" id="Q54QG7"/>
<dbReference type="OMA" id="SQHIEIN"/>
<dbReference type="PhylomeDB" id="Q54QG7"/>
<dbReference type="PRO" id="PR:Q54QG7"/>
<dbReference type="Proteomes" id="UP000002195">
    <property type="component" value="Chromosome 4"/>
</dbReference>
<dbReference type="GO" id="GO:0031012">
    <property type="term" value="C:extracellular matrix"/>
    <property type="evidence" value="ECO:0007005"/>
    <property type="project" value="dictyBase"/>
</dbReference>
<dbReference type="GO" id="GO:0005886">
    <property type="term" value="C:plasma membrane"/>
    <property type="evidence" value="ECO:0000318"/>
    <property type="project" value="GO_Central"/>
</dbReference>
<dbReference type="GO" id="GO:0004930">
    <property type="term" value="F:G protein-coupled receptor activity"/>
    <property type="evidence" value="ECO:0000318"/>
    <property type="project" value="GO_Central"/>
</dbReference>
<dbReference type="GO" id="GO:0007186">
    <property type="term" value="P:G protein-coupled receptor signaling pathway"/>
    <property type="evidence" value="ECO:0000318"/>
    <property type="project" value="GO_Central"/>
</dbReference>
<dbReference type="CDD" id="cd15047">
    <property type="entry name" value="7tmC_GABA-B-like"/>
    <property type="match status" value="1"/>
</dbReference>
<dbReference type="InterPro" id="IPR017978">
    <property type="entry name" value="GPCR_3_C"/>
</dbReference>
<dbReference type="InterPro" id="IPR051530">
    <property type="entry name" value="mGluR/GABA-B-like"/>
</dbReference>
<dbReference type="PANTHER" id="PTHR46924">
    <property type="entry name" value="METABOTROPIC GLUTAMATE RECEPTOR-LIKE PROTEIN C-RELATED-RELATED"/>
    <property type="match status" value="1"/>
</dbReference>
<dbReference type="PANTHER" id="PTHR46924:SF4">
    <property type="entry name" value="METABOTROPIC GLUTAMATE RECEPTOR-LIKE PROTEIN N"/>
    <property type="match status" value="1"/>
</dbReference>
<dbReference type="Pfam" id="PF00003">
    <property type="entry name" value="7tm_3"/>
    <property type="match status" value="1"/>
</dbReference>
<dbReference type="PROSITE" id="PS50259">
    <property type="entry name" value="G_PROTEIN_RECEP_F3_4"/>
    <property type="match status" value="1"/>
</dbReference>
<gene>
    <name type="primary">grlN</name>
    <name type="ORF">DDB_G0283839</name>
</gene>
<sequence>MKLYTHKINRIVDGYLDNLNKFGLNYMFEQDLIKITLDLGIPNNNIKFYNLNNSNSNSNNNNNNNNNNNNNNNNNNNNNNNNNNNNSNNSNNINNKNDILYNIIIEEKIDLIIFYKSIFSENANNISKTFNNLTTIIINDNIISNTNNNNNNNNKFYEINYPFKISTLLSGYISGLISETNIIGYLKTNKIQDQTLLDTFYFGARLSNPMVKLMFYTIDYDFKNASNNNFPFQEIIELSVSSLLKNGVDLISSSFENNEYLTFCNILLKQNIKIIGSNGFLISPPLNKDHVLFNSVYNLTLYILPIISNLINNTNTNNNNNTNNNESTNSQFNINLIFNPSISNLIINNINSNLSMIENQILNDTNIILTNQLNNESIIDLGIISGYILFKPISKTIEYGITIVSSILIGALIIIQICIIKYKNKPSFKSASPTFLIFIVIGGIFVYIGVIIWVSGVNVFTCNAKFWLISLGLTTMIGGIVVKNFRIWLIFDNPKLYHIKITNLQLLPWVLGMFLLNVFLLSLITGLGKLTPFKVFPNDEKFSSYEIQCEMMDGGLIALYFLLGYFAIIVMIGIFVSWKIRIVDIEEFNESKSVAYSLYSIVFCLLIIAPLTISKTGHNTEILCSGFIFIVAAIITIMFIPKFWALKIYGAEGSNEIFRQSSSSTSKRKNKSSTTNDPTNLDSISKKSSKNAPKRVNLFLYDFTDDDEESKQSSSSSKGDTIECMDVFTFIESVQPNSEAANEMTYNDDPTYTEPSEQPTYTESSEQPNPTPRTLTATPRTNDLTTPRTNDLTTPRTNDLITPRTNDLSTPRTNDLNTPRTDGILTPRSINSLATPRVEEPMSPRQYHNMMITLSPILEEENIVVVEKDEVIENSDSESESSDSNSDSIIQ</sequence>
<feature type="chain" id="PRO_0000370357" description="Metabotropic glutamate receptor-like protein N">
    <location>
        <begin position="1"/>
        <end position="891"/>
    </location>
</feature>
<feature type="topological domain" description="Extracellular" evidence="1">
    <location>
        <begin position="1"/>
        <end position="399"/>
    </location>
</feature>
<feature type="transmembrane region" description="Helical; Name=1" evidence="1">
    <location>
        <begin position="400"/>
        <end position="420"/>
    </location>
</feature>
<feature type="topological domain" description="Cytoplasmic" evidence="1">
    <location>
        <begin position="421"/>
        <end position="433"/>
    </location>
</feature>
<feature type="transmembrane region" description="Helical; Name=2" evidence="1">
    <location>
        <begin position="434"/>
        <end position="454"/>
    </location>
</feature>
<feature type="topological domain" description="Extracellular" evidence="1">
    <location>
        <begin position="455"/>
        <end position="461"/>
    </location>
</feature>
<feature type="transmembrane region" description="Helical; Name=3" evidence="1">
    <location>
        <begin position="462"/>
        <end position="482"/>
    </location>
</feature>
<feature type="topological domain" description="Cytoplasmic" evidence="1">
    <location>
        <begin position="483"/>
        <end position="505"/>
    </location>
</feature>
<feature type="transmembrane region" description="Helical; Name=4" evidence="1">
    <location>
        <begin position="506"/>
        <end position="526"/>
    </location>
</feature>
<feature type="topological domain" description="Extracellular" evidence="1">
    <location>
        <begin position="527"/>
        <end position="555"/>
    </location>
</feature>
<feature type="transmembrane region" description="Helical; Name=5" evidence="1">
    <location>
        <begin position="556"/>
        <end position="576"/>
    </location>
</feature>
<feature type="topological domain" description="Cytoplasmic" evidence="1">
    <location>
        <begin position="577"/>
        <end position="592"/>
    </location>
</feature>
<feature type="transmembrane region" description="Helical; Name=6" evidence="1">
    <location>
        <begin position="593"/>
        <end position="613"/>
    </location>
</feature>
<feature type="topological domain" description="Extracellular" evidence="1">
    <location>
        <begin position="614"/>
        <end position="625"/>
    </location>
</feature>
<feature type="transmembrane region" description="Helical; Name=7" evidence="1">
    <location>
        <begin position="626"/>
        <end position="646"/>
    </location>
</feature>
<feature type="topological domain" description="Cytoplasmic" evidence="1">
    <location>
        <begin position="647"/>
        <end position="891"/>
    </location>
</feature>
<feature type="region of interest" description="Disordered" evidence="2">
    <location>
        <begin position="52"/>
        <end position="91"/>
    </location>
</feature>
<feature type="region of interest" description="Disordered" evidence="2">
    <location>
        <begin position="660"/>
        <end position="689"/>
    </location>
</feature>
<feature type="region of interest" description="Disordered" evidence="2">
    <location>
        <begin position="742"/>
        <end position="827"/>
    </location>
</feature>
<feature type="region of interest" description="Disordered" evidence="2">
    <location>
        <begin position="869"/>
        <end position="891"/>
    </location>
</feature>
<feature type="compositionally biased region" description="Polar residues" evidence="2">
    <location>
        <begin position="742"/>
        <end position="767"/>
    </location>
</feature>
<feature type="compositionally biased region" description="Low complexity" evidence="2">
    <location>
        <begin position="772"/>
        <end position="782"/>
    </location>
</feature>
<feature type="compositionally biased region" description="Polar residues" evidence="2">
    <location>
        <begin position="783"/>
        <end position="820"/>
    </location>
</feature>
<feature type="compositionally biased region" description="Acidic residues" evidence="2">
    <location>
        <begin position="872"/>
        <end position="881"/>
    </location>
</feature>
<feature type="compositionally biased region" description="Low complexity" evidence="2">
    <location>
        <begin position="882"/>
        <end position="891"/>
    </location>
</feature>
<feature type="glycosylation site" description="N-linked (GlcNAc...) asparagine" evidence="1">
    <location>
        <position position="52"/>
    </location>
</feature>
<feature type="glycosylation site" description="N-linked (GlcNAc...) asparagine" evidence="1">
    <location>
        <position position="85"/>
    </location>
</feature>
<feature type="glycosylation site" description="N-linked (GlcNAc...) asparagine" evidence="1">
    <location>
        <position position="88"/>
    </location>
</feature>
<feature type="glycosylation site" description="N-linked (GlcNAc...) asparagine" evidence="1">
    <location>
        <position position="125"/>
    </location>
</feature>
<feature type="glycosylation site" description="N-linked (GlcNAc...) asparagine" evidence="1">
    <location>
        <position position="132"/>
    </location>
</feature>
<feature type="glycosylation site" description="N-linked (GlcNAc...) asparagine" evidence="1">
    <location>
        <position position="224"/>
    </location>
</feature>
<feature type="glycosylation site" description="N-linked (GlcNAc...) asparagine" evidence="1">
    <location>
        <position position="298"/>
    </location>
</feature>
<feature type="glycosylation site" description="N-linked (GlcNAc...) asparagine" evidence="1">
    <location>
        <position position="312"/>
    </location>
</feature>
<feature type="glycosylation site" description="N-linked (GlcNAc...) asparagine" evidence="1">
    <location>
        <position position="320"/>
    </location>
</feature>
<feature type="glycosylation site" description="N-linked (GlcNAc...) asparagine" evidence="1">
    <location>
        <position position="325"/>
    </location>
</feature>
<feature type="glycosylation site" description="N-linked (GlcNAc...) asparagine" evidence="1">
    <location>
        <position position="353"/>
    </location>
</feature>
<feature type="glycosylation site" description="N-linked (GlcNAc...) asparagine" evidence="1">
    <location>
        <position position="363"/>
    </location>
</feature>
<feature type="glycosylation site" description="N-linked (GlcNAc...) asparagine" evidence="1">
    <location>
        <position position="375"/>
    </location>
</feature>
<accession>Q54QG7</accession>
<evidence type="ECO:0000255" key="1"/>
<evidence type="ECO:0000256" key="2">
    <source>
        <dbReference type="SAM" id="MobiDB-lite"/>
    </source>
</evidence>
<evidence type="ECO:0000269" key="3">
    <source>
    </source>
</evidence>
<evidence type="ECO:0000305" key="4"/>
<comment type="subcellular location">
    <subcellularLocation>
        <location evidence="4">Membrane</location>
        <topology evidence="4">Multi-pass membrane protein</topology>
    </subcellularLocation>
</comment>
<comment type="developmental stage">
    <text evidence="3">Increasingly expressed from early aggregation.</text>
</comment>
<comment type="similarity">
    <text evidence="4">Belongs to the G-protein coupled receptor 3 family. GABA-B receptor subfamily.</text>
</comment>
<organism>
    <name type="scientific">Dictyostelium discoideum</name>
    <name type="common">Social amoeba</name>
    <dbReference type="NCBI Taxonomy" id="44689"/>
    <lineage>
        <taxon>Eukaryota</taxon>
        <taxon>Amoebozoa</taxon>
        <taxon>Evosea</taxon>
        <taxon>Eumycetozoa</taxon>
        <taxon>Dictyostelia</taxon>
        <taxon>Dictyosteliales</taxon>
        <taxon>Dictyosteliaceae</taxon>
        <taxon>Dictyostelium</taxon>
    </lineage>
</organism>
<name>GRLN_DICDI</name>
<reference key="1">
    <citation type="journal article" date="2005" name="Nature">
        <title>The genome of the social amoeba Dictyostelium discoideum.</title>
        <authorList>
            <person name="Eichinger L."/>
            <person name="Pachebat J.A."/>
            <person name="Gloeckner G."/>
            <person name="Rajandream M.A."/>
            <person name="Sucgang R."/>
            <person name="Berriman M."/>
            <person name="Song J."/>
            <person name="Olsen R."/>
            <person name="Szafranski K."/>
            <person name="Xu Q."/>
            <person name="Tunggal B."/>
            <person name="Kummerfeld S."/>
            <person name="Madera M."/>
            <person name="Konfortov B.A."/>
            <person name="Rivero F."/>
            <person name="Bankier A.T."/>
            <person name="Lehmann R."/>
            <person name="Hamlin N."/>
            <person name="Davies R."/>
            <person name="Gaudet P."/>
            <person name="Fey P."/>
            <person name="Pilcher K."/>
            <person name="Chen G."/>
            <person name="Saunders D."/>
            <person name="Sodergren E.J."/>
            <person name="Davis P."/>
            <person name="Kerhornou A."/>
            <person name="Nie X."/>
            <person name="Hall N."/>
            <person name="Anjard C."/>
            <person name="Hemphill L."/>
            <person name="Bason N."/>
            <person name="Farbrother P."/>
            <person name="Desany B."/>
            <person name="Just E."/>
            <person name="Morio T."/>
            <person name="Rost R."/>
            <person name="Churcher C.M."/>
            <person name="Cooper J."/>
            <person name="Haydock S."/>
            <person name="van Driessche N."/>
            <person name="Cronin A."/>
            <person name="Goodhead I."/>
            <person name="Muzny D.M."/>
            <person name="Mourier T."/>
            <person name="Pain A."/>
            <person name="Lu M."/>
            <person name="Harper D."/>
            <person name="Lindsay R."/>
            <person name="Hauser H."/>
            <person name="James K.D."/>
            <person name="Quiles M."/>
            <person name="Madan Babu M."/>
            <person name="Saito T."/>
            <person name="Buchrieser C."/>
            <person name="Wardroper A."/>
            <person name="Felder M."/>
            <person name="Thangavelu M."/>
            <person name="Johnson D."/>
            <person name="Knights A."/>
            <person name="Loulseged H."/>
            <person name="Mungall K.L."/>
            <person name="Oliver K."/>
            <person name="Price C."/>
            <person name="Quail M.A."/>
            <person name="Urushihara H."/>
            <person name="Hernandez J."/>
            <person name="Rabbinowitsch E."/>
            <person name="Steffen D."/>
            <person name="Sanders M."/>
            <person name="Ma J."/>
            <person name="Kohara Y."/>
            <person name="Sharp S."/>
            <person name="Simmonds M.N."/>
            <person name="Spiegler S."/>
            <person name="Tivey A."/>
            <person name="Sugano S."/>
            <person name="White B."/>
            <person name="Walker D."/>
            <person name="Woodward J.R."/>
            <person name="Winckler T."/>
            <person name="Tanaka Y."/>
            <person name="Shaulsky G."/>
            <person name="Schleicher M."/>
            <person name="Weinstock G.M."/>
            <person name="Rosenthal A."/>
            <person name="Cox E.C."/>
            <person name="Chisholm R.L."/>
            <person name="Gibbs R.A."/>
            <person name="Loomis W.F."/>
            <person name="Platzer M."/>
            <person name="Kay R.R."/>
            <person name="Williams J.G."/>
            <person name="Dear P.H."/>
            <person name="Noegel A.A."/>
            <person name="Barrell B.G."/>
            <person name="Kuspa A."/>
        </authorList>
    </citation>
    <scope>NUCLEOTIDE SEQUENCE [LARGE SCALE GENOMIC DNA]</scope>
    <source>
        <strain>AX4</strain>
    </source>
</reference>
<reference key="2">
    <citation type="journal article" date="2006" name="Eur. J. Cell Biol.">
        <title>The Dictyostelium repertoire of seven transmembrane domain receptors.</title>
        <authorList>
            <person name="Prabhu Y."/>
            <person name="Eichinger L."/>
        </authorList>
    </citation>
    <scope>NOMENCLATURE</scope>
</reference>
<reference key="3">
    <citation type="journal article" date="2007" name="BMC Dev. Biol.">
        <title>GrlJ, a Dictyostelium GABAB-like receptor with roles in post-aggregation development.</title>
        <authorList>
            <person name="Prabhu Y."/>
            <person name="Mueller R."/>
            <person name="Anjard C."/>
            <person name="Noegel A.A."/>
        </authorList>
    </citation>
    <scope>DEVELOPMENTAL STAGE</scope>
</reference>
<keyword id="KW-0297">G-protein coupled receptor</keyword>
<keyword id="KW-0325">Glycoprotein</keyword>
<keyword id="KW-0472">Membrane</keyword>
<keyword id="KW-0675">Receptor</keyword>
<keyword id="KW-1185">Reference proteome</keyword>
<keyword id="KW-0807">Transducer</keyword>
<keyword id="KW-0812">Transmembrane</keyword>
<keyword id="KW-1133">Transmembrane helix</keyword>
<proteinExistence type="evidence at transcript level"/>
<protein>
    <recommendedName>
        <fullName>Metabotropic glutamate receptor-like protein N</fullName>
    </recommendedName>
</protein>